<organism>
    <name type="scientific">Escherichia coli (strain UTI89 / UPEC)</name>
    <dbReference type="NCBI Taxonomy" id="364106"/>
    <lineage>
        <taxon>Bacteria</taxon>
        <taxon>Pseudomonadati</taxon>
        <taxon>Pseudomonadota</taxon>
        <taxon>Gammaproteobacteria</taxon>
        <taxon>Enterobacterales</taxon>
        <taxon>Enterobacteriaceae</taxon>
        <taxon>Escherichia</taxon>
    </lineage>
</organism>
<feature type="chain" id="PRO_0000376211" description="NADH-quinone oxidoreductase subunit B">
    <location>
        <begin position="1"/>
        <end position="220"/>
    </location>
</feature>
<feature type="binding site" evidence="1">
    <location>
        <position position="63"/>
    </location>
    <ligand>
        <name>[4Fe-4S] cluster</name>
        <dbReference type="ChEBI" id="CHEBI:49883"/>
    </ligand>
</feature>
<feature type="binding site" evidence="1">
    <location>
        <position position="64"/>
    </location>
    <ligand>
        <name>[4Fe-4S] cluster</name>
        <dbReference type="ChEBI" id="CHEBI:49883"/>
    </ligand>
</feature>
<feature type="binding site" evidence="1">
    <location>
        <position position="129"/>
    </location>
    <ligand>
        <name>[4Fe-4S] cluster</name>
        <dbReference type="ChEBI" id="CHEBI:49883"/>
    </ligand>
</feature>
<feature type="binding site" evidence="1">
    <location>
        <position position="158"/>
    </location>
    <ligand>
        <name>[4Fe-4S] cluster</name>
        <dbReference type="ChEBI" id="CHEBI:49883"/>
    </ligand>
</feature>
<accession>Q1R9D0</accession>
<sequence>MDYTLTRIDPNGENDRYPLQKQEIVTDPLEQEVNKNVFMGKLNDMVNWGRKNSIWPYNFGLSCCYVEMVTSFTAVHDVARFGAEVLRASPRQADLMVVAGTCFTKMAPVIQRLYDQMLEPKWVISMGACANSGGMYDIYSVVQGVDKFIPVDVYIPGCPPRPEAYMQALMLLQESIGKERRPLSWVVGDQGVYRANMQSERERKRGERIAVTNLRTPDEI</sequence>
<dbReference type="EC" id="7.1.1.-" evidence="1"/>
<dbReference type="EMBL" id="CP000243">
    <property type="protein sequence ID" value="ABE08034.1"/>
    <property type="molecule type" value="Genomic_DNA"/>
</dbReference>
<dbReference type="RefSeq" id="WP_000386733.1">
    <property type="nucleotide sequence ID" value="NZ_CP064825.1"/>
</dbReference>
<dbReference type="SMR" id="Q1R9D0"/>
<dbReference type="GeneID" id="93774887"/>
<dbReference type="KEGG" id="eci:UTI89_C2567"/>
<dbReference type="HOGENOM" id="CLU_055737_7_3_6"/>
<dbReference type="Proteomes" id="UP000001952">
    <property type="component" value="Chromosome"/>
</dbReference>
<dbReference type="GO" id="GO:0005886">
    <property type="term" value="C:plasma membrane"/>
    <property type="evidence" value="ECO:0007669"/>
    <property type="project" value="UniProtKB-SubCell"/>
</dbReference>
<dbReference type="GO" id="GO:0045271">
    <property type="term" value="C:respiratory chain complex I"/>
    <property type="evidence" value="ECO:0007669"/>
    <property type="project" value="TreeGrafter"/>
</dbReference>
<dbReference type="GO" id="GO:0051539">
    <property type="term" value="F:4 iron, 4 sulfur cluster binding"/>
    <property type="evidence" value="ECO:0007669"/>
    <property type="project" value="UniProtKB-KW"/>
</dbReference>
<dbReference type="GO" id="GO:0005506">
    <property type="term" value="F:iron ion binding"/>
    <property type="evidence" value="ECO:0007669"/>
    <property type="project" value="UniProtKB-UniRule"/>
</dbReference>
<dbReference type="GO" id="GO:0008137">
    <property type="term" value="F:NADH dehydrogenase (ubiquinone) activity"/>
    <property type="evidence" value="ECO:0007669"/>
    <property type="project" value="InterPro"/>
</dbReference>
<dbReference type="GO" id="GO:0050136">
    <property type="term" value="F:NADH:ubiquinone reductase (non-electrogenic) activity"/>
    <property type="evidence" value="ECO:0007669"/>
    <property type="project" value="UniProtKB-UniRule"/>
</dbReference>
<dbReference type="GO" id="GO:0048038">
    <property type="term" value="F:quinone binding"/>
    <property type="evidence" value="ECO:0007669"/>
    <property type="project" value="UniProtKB-KW"/>
</dbReference>
<dbReference type="GO" id="GO:0009060">
    <property type="term" value="P:aerobic respiration"/>
    <property type="evidence" value="ECO:0007669"/>
    <property type="project" value="TreeGrafter"/>
</dbReference>
<dbReference type="GO" id="GO:0015990">
    <property type="term" value="P:electron transport coupled proton transport"/>
    <property type="evidence" value="ECO:0007669"/>
    <property type="project" value="TreeGrafter"/>
</dbReference>
<dbReference type="FunFam" id="3.40.50.12280:FF:000002">
    <property type="entry name" value="NADH-quinone oxidoreductase subunit B"/>
    <property type="match status" value="1"/>
</dbReference>
<dbReference type="Gene3D" id="3.40.50.12280">
    <property type="match status" value="1"/>
</dbReference>
<dbReference type="HAMAP" id="MF_01356">
    <property type="entry name" value="NDH1_NuoB"/>
    <property type="match status" value="1"/>
</dbReference>
<dbReference type="InterPro" id="IPR006137">
    <property type="entry name" value="NADH_UbQ_OxRdtase-like_20kDa"/>
</dbReference>
<dbReference type="InterPro" id="IPR006138">
    <property type="entry name" value="NADH_UQ_OxRdtase_20Kd_su"/>
</dbReference>
<dbReference type="NCBIfam" id="TIGR01957">
    <property type="entry name" value="nuoB_fam"/>
    <property type="match status" value="1"/>
</dbReference>
<dbReference type="NCBIfam" id="NF005012">
    <property type="entry name" value="PRK06411.1"/>
    <property type="match status" value="1"/>
</dbReference>
<dbReference type="PANTHER" id="PTHR11995">
    <property type="entry name" value="NADH DEHYDROGENASE"/>
    <property type="match status" value="1"/>
</dbReference>
<dbReference type="PANTHER" id="PTHR11995:SF14">
    <property type="entry name" value="NADH DEHYDROGENASE [UBIQUINONE] IRON-SULFUR PROTEIN 7, MITOCHONDRIAL"/>
    <property type="match status" value="1"/>
</dbReference>
<dbReference type="Pfam" id="PF01058">
    <property type="entry name" value="Oxidored_q6"/>
    <property type="match status" value="1"/>
</dbReference>
<dbReference type="SUPFAM" id="SSF56770">
    <property type="entry name" value="HydA/Nqo6-like"/>
    <property type="match status" value="1"/>
</dbReference>
<dbReference type="PROSITE" id="PS01150">
    <property type="entry name" value="COMPLEX1_20K"/>
    <property type="match status" value="1"/>
</dbReference>
<evidence type="ECO:0000255" key="1">
    <source>
        <dbReference type="HAMAP-Rule" id="MF_01356"/>
    </source>
</evidence>
<comment type="function">
    <text evidence="1">NDH-1 shuttles electrons from NADH, via FMN and iron-sulfur (Fe-S) centers, to quinones in the respiratory chain. The immediate electron acceptor for the enzyme in this species is believed to be ubiquinone. Couples the redox reaction to proton translocation (for every two electrons transferred, four hydrogen ions are translocated across the cytoplasmic membrane), and thus conserves the redox energy in a proton gradient.</text>
</comment>
<comment type="catalytic activity">
    <reaction evidence="1">
        <text>a quinone + NADH + 5 H(+)(in) = a quinol + NAD(+) + 4 H(+)(out)</text>
        <dbReference type="Rhea" id="RHEA:57888"/>
        <dbReference type="ChEBI" id="CHEBI:15378"/>
        <dbReference type="ChEBI" id="CHEBI:24646"/>
        <dbReference type="ChEBI" id="CHEBI:57540"/>
        <dbReference type="ChEBI" id="CHEBI:57945"/>
        <dbReference type="ChEBI" id="CHEBI:132124"/>
    </reaction>
</comment>
<comment type="cofactor">
    <cofactor evidence="1">
        <name>[4Fe-4S] cluster</name>
        <dbReference type="ChEBI" id="CHEBI:49883"/>
    </cofactor>
    <text evidence="1">Binds 1 [4Fe-4S] cluster.</text>
</comment>
<comment type="subunit">
    <text evidence="1">NDH-1 is composed of 13 different subunits. Subunits NuoB, CD, E, F, and G constitute the peripheral sector of the complex.</text>
</comment>
<comment type="subcellular location">
    <subcellularLocation>
        <location evidence="1">Cell inner membrane</location>
        <topology evidence="1">Peripheral membrane protein</topology>
        <orientation evidence="1">Cytoplasmic side</orientation>
    </subcellularLocation>
</comment>
<comment type="similarity">
    <text evidence="1">Belongs to the complex I 20 kDa subunit family.</text>
</comment>
<name>NUOB_ECOUT</name>
<keyword id="KW-0004">4Fe-4S</keyword>
<keyword id="KW-0997">Cell inner membrane</keyword>
<keyword id="KW-1003">Cell membrane</keyword>
<keyword id="KW-0408">Iron</keyword>
<keyword id="KW-0411">Iron-sulfur</keyword>
<keyword id="KW-0472">Membrane</keyword>
<keyword id="KW-0479">Metal-binding</keyword>
<keyword id="KW-0520">NAD</keyword>
<keyword id="KW-0874">Quinone</keyword>
<keyword id="KW-1278">Translocase</keyword>
<keyword id="KW-0813">Transport</keyword>
<keyword id="KW-0830">Ubiquinone</keyword>
<protein>
    <recommendedName>
        <fullName evidence="1">NADH-quinone oxidoreductase subunit B</fullName>
        <ecNumber evidence="1">7.1.1.-</ecNumber>
    </recommendedName>
    <alternativeName>
        <fullName evidence="1">NADH dehydrogenase I subunit B</fullName>
    </alternativeName>
    <alternativeName>
        <fullName evidence="1">NDH-1 subunit B</fullName>
    </alternativeName>
</protein>
<proteinExistence type="inferred from homology"/>
<gene>
    <name evidence="1" type="primary">nuoB</name>
    <name type="ordered locus">UTI89_C2567</name>
</gene>
<reference key="1">
    <citation type="journal article" date="2006" name="Proc. Natl. Acad. Sci. U.S.A.">
        <title>Identification of genes subject to positive selection in uropathogenic strains of Escherichia coli: a comparative genomics approach.</title>
        <authorList>
            <person name="Chen S.L."/>
            <person name="Hung C.-S."/>
            <person name="Xu J."/>
            <person name="Reigstad C.S."/>
            <person name="Magrini V."/>
            <person name="Sabo A."/>
            <person name="Blasiar D."/>
            <person name="Bieri T."/>
            <person name="Meyer R.R."/>
            <person name="Ozersky P."/>
            <person name="Armstrong J.R."/>
            <person name="Fulton R.S."/>
            <person name="Latreille J.P."/>
            <person name="Spieth J."/>
            <person name="Hooton T.M."/>
            <person name="Mardis E.R."/>
            <person name="Hultgren S.J."/>
            <person name="Gordon J.I."/>
        </authorList>
    </citation>
    <scope>NUCLEOTIDE SEQUENCE [LARGE SCALE GENOMIC DNA]</scope>
    <source>
        <strain>UTI89 / UPEC</strain>
    </source>
</reference>